<feature type="chain" id="PRO_0000247881" description="tRNA-guanine(15) transglycosylase">
    <location>
        <begin position="1"/>
        <end position="495"/>
    </location>
</feature>
<feature type="active site" description="Nucleophile" evidence="1">
    <location>
        <position position="83"/>
    </location>
</feature>
<feature type="binding site" evidence="1">
    <location>
        <position position="118"/>
    </location>
    <ligand>
        <name>substrate</name>
    </ligand>
</feature>
<feature type="binding site" evidence="1">
    <location>
        <position position="273"/>
    </location>
    <ligand>
        <name>Zn(2+)</name>
        <dbReference type="ChEBI" id="CHEBI:29105"/>
    </ligand>
</feature>
<feature type="binding site" evidence="1">
    <location>
        <position position="278"/>
    </location>
    <ligand>
        <name>Zn(2+)</name>
        <dbReference type="ChEBI" id="CHEBI:29105"/>
    </ligand>
</feature>
<organism>
    <name type="scientific">Pyrobaculum aerophilum (strain ATCC 51768 / DSM 7523 / JCM 9630 / CIP 104966 / NBRC 100827 / IM2)</name>
    <dbReference type="NCBI Taxonomy" id="178306"/>
    <lineage>
        <taxon>Archaea</taxon>
        <taxon>Thermoproteota</taxon>
        <taxon>Thermoprotei</taxon>
        <taxon>Thermoproteales</taxon>
        <taxon>Thermoproteaceae</taxon>
        <taxon>Pyrobaculum</taxon>
    </lineage>
</organism>
<protein>
    <recommendedName>
        <fullName evidence="1">tRNA-guanine(15) transglycosylase</fullName>
        <ecNumber evidence="1">2.4.2.48</ecNumber>
    </recommendedName>
    <alternativeName>
        <fullName evidence="1">7-cyano-7-deazaguanine tRNA-ribosyltransferase</fullName>
    </alternativeName>
    <alternativeName>
        <fullName evidence="1">Archaeal tRNA-guanine transglycosylase</fullName>
    </alternativeName>
</protein>
<evidence type="ECO:0000255" key="1">
    <source>
        <dbReference type="HAMAP-Rule" id="MF_01634"/>
    </source>
</evidence>
<proteinExistence type="inferred from homology"/>
<sequence length="495" mass="56923">MSFEIIAKDLAGRVGKLYTKSGVIETPALFPVVDPRKQELPSAVIERYFGQIITNAYFVYRLTGGRAVDIKKVLSWNAVLMTDSGAYQILRYGSVEVDPDEILQFQARIGSDIGVILDLPFDYEEPYESALLKVEETIRRAKRASAMLDKLEDMLVVGPIQGGLYLDLLATSAREISKLGFHIFAVGSPTTLLEEYRFDLLLEVILHVKANILREAPLHLFGAGHPLVLPFAVALGVDLFDSASYILYARDDRIMLRDRTLRLEDVKTDYLPCSTKLCHKPVKELREMPHEERIQLIAEHNLAILREELLEIKQRIHEGTLWEYLEIKARAHPTLYRFLRSLGRYKRLIEEYDPETHPETHGLFFYQDTAESRPEPHRHWSRTANLYTPSKVAIVIRAGEKPYNKSWEYRYLKSLVGDRAHVLFYDPVFGLVPEEVAEIYPLSQNEAEGESEAARAFAYEWLNNYDVILLYRVDLPMLSKKVIPLRSLDDVLHYI</sequence>
<dbReference type="EC" id="2.4.2.48" evidence="1"/>
<dbReference type="EMBL" id="AE009441">
    <property type="protein sequence ID" value="AAL63021.1"/>
    <property type="molecule type" value="Genomic_DNA"/>
</dbReference>
<dbReference type="RefSeq" id="WP_011007493.1">
    <property type="nucleotide sequence ID" value="NC_003364.1"/>
</dbReference>
<dbReference type="SMR" id="Q8ZYH2"/>
<dbReference type="FunCoup" id="Q8ZYH2">
    <property type="interactions" value="135"/>
</dbReference>
<dbReference type="STRING" id="178306.PAE0777"/>
<dbReference type="EnsemblBacteria" id="AAL63021">
    <property type="protein sequence ID" value="AAL63021"/>
    <property type="gene ID" value="PAE0777"/>
</dbReference>
<dbReference type="GeneID" id="1465249"/>
<dbReference type="KEGG" id="pai:PAE0777"/>
<dbReference type="PATRIC" id="fig|178306.9.peg.568"/>
<dbReference type="eggNOG" id="arCOG00989">
    <property type="taxonomic scope" value="Archaea"/>
</dbReference>
<dbReference type="HOGENOM" id="CLU_030083_0_0_2"/>
<dbReference type="InParanoid" id="Q8ZYH2"/>
<dbReference type="UniPathway" id="UPA00393"/>
<dbReference type="Proteomes" id="UP000002439">
    <property type="component" value="Chromosome"/>
</dbReference>
<dbReference type="GO" id="GO:0005737">
    <property type="term" value="C:cytoplasm"/>
    <property type="evidence" value="ECO:0000318"/>
    <property type="project" value="GO_Central"/>
</dbReference>
<dbReference type="GO" id="GO:0016763">
    <property type="term" value="F:pentosyltransferase activity"/>
    <property type="evidence" value="ECO:0007669"/>
    <property type="project" value="UniProtKB-UniRule"/>
</dbReference>
<dbReference type="GO" id="GO:0008270">
    <property type="term" value="F:zinc ion binding"/>
    <property type="evidence" value="ECO:0007669"/>
    <property type="project" value="UniProtKB-UniRule"/>
</dbReference>
<dbReference type="GO" id="GO:0002099">
    <property type="term" value="P:tRNA wobble guanine modification"/>
    <property type="evidence" value="ECO:0000318"/>
    <property type="project" value="GO_Central"/>
</dbReference>
<dbReference type="Gene3D" id="3.20.20.105">
    <property type="entry name" value="Queuine tRNA-ribosyltransferase-like"/>
    <property type="match status" value="1"/>
</dbReference>
<dbReference type="Gene3D" id="3.40.50.10630">
    <property type="entry name" value="Uracil-DNA glycosylase-like"/>
    <property type="match status" value="1"/>
</dbReference>
<dbReference type="HAMAP" id="MF_01634">
    <property type="entry name" value="TgtA_arch"/>
    <property type="match status" value="1"/>
</dbReference>
<dbReference type="InterPro" id="IPR050076">
    <property type="entry name" value="ArchSynthase1/Queuine_TRR"/>
</dbReference>
<dbReference type="InterPro" id="IPR036511">
    <property type="entry name" value="TGT-like_sf"/>
</dbReference>
<dbReference type="InterPro" id="IPR004804">
    <property type="entry name" value="TgtA"/>
</dbReference>
<dbReference type="InterPro" id="IPR002616">
    <property type="entry name" value="tRNA_ribo_trans-like"/>
</dbReference>
<dbReference type="NCBIfam" id="TIGR00432">
    <property type="entry name" value="arcsn_tRNA_tgt"/>
    <property type="match status" value="1"/>
</dbReference>
<dbReference type="NCBIfam" id="TIGR00449">
    <property type="entry name" value="tgt_general"/>
    <property type="match status" value="1"/>
</dbReference>
<dbReference type="PANTHER" id="PTHR46499">
    <property type="entry name" value="QUEUINE TRNA-RIBOSYLTRANSFERASE"/>
    <property type="match status" value="1"/>
</dbReference>
<dbReference type="PANTHER" id="PTHR46499:SF1">
    <property type="entry name" value="QUEUINE TRNA-RIBOSYLTRANSFERASE"/>
    <property type="match status" value="1"/>
</dbReference>
<dbReference type="Pfam" id="PF01702">
    <property type="entry name" value="TGT"/>
    <property type="match status" value="1"/>
</dbReference>
<dbReference type="SUPFAM" id="SSF88802">
    <property type="entry name" value="Pre-PUA domain"/>
    <property type="match status" value="1"/>
</dbReference>
<dbReference type="SUPFAM" id="SSF51713">
    <property type="entry name" value="tRNA-guanine transglycosylase"/>
    <property type="match status" value="1"/>
</dbReference>
<reference key="1">
    <citation type="journal article" date="2002" name="Proc. Natl. Acad. Sci. U.S.A.">
        <title>Genome sequence of the hyperthermophilic crenarchaeon Pyrobaculum aerophilum.</title>
        <authorList>
            <person name="Fitz-Gibbon S.T."/>
            <person name="Ladner H."/>
            <person name="Kim U.-J."/>
            <person name="Stetter K.O."/>
            <person name="Simon M.I."/>
            <person name="Miller J.H."/>
        </authorList>
    </citation>
    <scope>NUCLEOTIDE SEQUENCE [LARGE SCALE GENOMIC DNA]</scope>
    <source>
        <strain>ATCC 51768 / DSM 7523 / JCM 9630 / CIP 104966 / NBRC 100827 / IM2</strain>
    </source>
</reference>
<comment type="function">
    <text evidence="1">Exchanges the guanine residue with 7-cyano-7-deazaguanine (preQ0) at position 15 in the dihydrouridine loop (D-loop) of archaeal tRNAs.</text>
</comment>
<comment type="catalytic activity">
    <reaction evidence="1">
        <text>guanosine(15) in tRNA + 7-cyano-7-deazaguanine = 7-cyano-7-carbaguanosine(15) in tRNA + guanine</text>
        <dbReference type="Rhea" id="RHEA:43164"/>
        <dbReference type="Rhea" id="RHEA-COMP:10371"/>
        <dbReference type="Rhea" id="RHEA-COMP:10372"/>
        <dbReference type="ChEBI" id="CHEBI:16235"/>
        <dbReference type="ChEBI" id="CHEBI:45075"/>
        <dbReference type="ChEBI" id="CHEBI:74269"/>
        <dbReference type="ChEBI" id="CHEBI:82850"/>
        <dbReference type="EC" id="2.4.2.48"/>
    </reaction>
</comment>
<comment type="cofactor">
    <cofactor evidence="1">
        <name>Zn(2+)</name>
        <dbReference type="ChEBI" id="CHEBI:29105"/>
    </cofactor>
    <text evidence="1">Binds 1 zinc ion per subunit.</text>
</comment>
<comment type="pathway">
    <text evidence="1">tRNA modification; archaeosine-tRNA biosynthesis.</text>
</comment>
<comment type="similarity">
    <text evidence="1">Belongs to the archaeosine tRNA-ribosyltransferase family.</text>
</comment>
<name>ATGT_PYRAE</name>
<accession>Q8ZYH2</accession>
<gene>
    <name evidence="1" type="primary">tgtA</name>
    <name type="ordered locus">PAE0777</name>
</gene>
<keyword id="KW-0328">Glycosyltransferase</keyword>
<keyword id="KW-0479">Metal-binding</keyword>
<keyword id="KW-1185">Reference proteome</keyword>
<keyword id="KW-0808">Transferase</keyword>
<keyword id="KW-0819">tRNA processing</keyword>
<keyword id="KW-0862">Zinc</keyword>